<organism>
    <name type="scientific">Bacillus pumilus</name>
    <name type="common">Bacillus mesentericus</name>
    <dbReference type="NCBI Taxonomy" id="1408"/>
    <lineage>
        <taxon>Bacteria</taxon>
        <taxon>Bacillati</taxon>
        <taxon>Bacillota</taxon>
        <taxon>Bacilli</taxon>
        <taxon>Bacillales</taxon>
        <taxon>Bacillaceae</taxon>
        <taxon>Bacillus</taxon>
    </lineage>
</organism>
<gene>
    <name type="primary">mtrB</name>
</gene>
<dbReference type="EMBL" id="L37879">
    <property type="protein sequence ID" value="AAA67544.1"/>
    <property type="molecule type" value="Genomic_DNA"/>
</dbReference>
<dbReference type="PIR" id="I39905">
    <property type="entry name" value="I39905"/>
</dbReference>
<dbReference type="RefSeq" id="WP_008344541.1">
    <property type="nucleotide sequence ID" value="NZ_VKQA01000001.1"/>
</dbReference>
<dbReference type="SMR" id="P48064"/>
<dbReference type="GeneID" id="66363592"/>
<dbReference type="OrthoDB" id="2111980at2"/>
<dbReference type="GO" id="GO:0003723">
    <property type="term" value="F:RNA binding"/>
    <property type="evidence" value="ECO:0007669"/>
    <property type="project" value="UniProtKB-UniRule"/>
</dbReference>
<dbReference type="GO" id="GO:0006353">
    <property type="term" value="P:DNA-templated transcription termination"/>
    <property type="evidence" value="ECO:0007669"/>
    <property type="project" value="InterPro"/>
</dbReference>
<dbReference type="GO" id="GO:0006355">
    <property type="term" value="P:regulation of DNA-templated transcription"/>
    <property type="evidence" value="ECO:0007669"/>
    <property type="project" value="InterPro"/>
</dbReference>
<dbReference type="Gene3D" id="2.60.40.50">
    <property type="entry name" value="TRAP-like"/>
    <property type="match status" value="1"/>
</dbReference>
<dbReference type="HAMAP" id="MF_00798">
    <property type="entry name" value="Trp_attenuator"/>
    <property type="match status" value="1"/>
</dbReference>
<dbReference type="InterPro" id="IPR000824">
    <property type="entry name" value="MtrB"/>
</dbReference>
<dbReference type="InterPro" id="IPR016031">
    <property type="entry name" value="Trp_RNA-bd_attenuator-like_dom"/>
</dbReference>
<dbReference type="InterPro" id="IPR023558">
    <property type="entry name" value="Trp_RNA-bd_attenuator_dom"/>
</dbReference>
<dbReference type="NCBIfam" id="NF009724">
    <property type="entry name" value="PRK13251.1"/>
    <property type="match status" value="1"/>
</dbReference>
<dbReference type="Pfam" id="PF02081">
    <property type="entry name" value="TrpBP"/>
    <property type="match status" value="1"/>
</dbReference>
<dbReference type="PRINTS" id="PR00687">
    <property type="entry name" value="TRPRNAAP"/>
</dbReference>
<dbReference type="SUPFAM" id="SSF51219">
    <property type="entry name" value="TRAP-like"/>
    <property type="match status" value="1"/>
</dbReference>
<comment type="function">
    <text>Required for transcription attenuation control in the Trp operon. This trans-acting factor seems to recognize a 10 bases nucleotide sequence in the Trp leader transcript causing transcription termination. Binds the leader RNA only in presence of L-tryptophan.</text>
</comment>
<comment type="subunit">
    <text evidence="1">Oligomer of 11 identical subunits arranged in doughnut-like structure.</text>
</comment>
<comment type="similarity">
    <text evidence="2">Belongs to the MtrB family.</text>
</comment>
<reference key="1">
    <citation type="journal article" date="1995" name="J. Bacteriol.">
        <title>The mtrB gene of Bacillus pumilus encodes a protein with sequence and functional homology to the trp RNA-binding attenuation protein (TRAP) of Bacillus subtilis.</title>
        <authorList>
            <person name="Hoffman R.J."/>
            <person name="Gollnick P."/>
        </authorList>
    </citation>
    <scope>NUCLEOTIDE SEQUENCE [GENOMIC DNA]</scope>
</reference>
<protein>
    <recommendedName>
        <fullName>Transcription attenuation protein MtrB</fullName>
    </recommendedName>
    <alternativeName>
        <fullName>Trp RNA-binding attenuation protein</fullName>
        <shortName>TRAP</shortName>
    </alternativeName>
    <alternativeName>
        <fullName>Tryptophan RNA-binding attenuator protein</fullName>
    </alternativeName>
</protein>
<sequence>MSENKASDFVVIKAIDNGVNVIGLTRGSDTRFHHSEKLDKGEVIIAQFTEHTSAIKVRGDAVIQTSFGEIQSEAKK</sequence>
<keyword id="KW-0694">RNA-binding</keyword>
<keyword id="KW-0804">Transcription</keyword>
<keyword id="KW-0805">Transcription regulation</keyword>
<name>MTRB_BACPU</name>
<feature type="chain" id="PRO_0000206026" description="Transcription attenuation protein MtrB">
    <location>
        <begin position="1"/>
        <end position="76"/>
    </location>
</feature>
<accession>P48064</accession>
<proteinExistence type="inferred from homology"/>
<evidence type="ECO:0000250" key="1"/>
<evidence type="ECO:0000305" key="2"/>